<proteinExistence type="inferred from homology"/>
<name>ASTE_SERP5</name>
<reference key="1">
    <citation type="submission" date="2007-09" db="EMBL/GenBank/DDBJ databases">
        <title>Complete sequence of chromosome of Serratia proteamaculans 568.</title>
        <authorList>
            <consortium name="US DOE Joint Genome Institute"/>
            <person name="Copeland A."/>
            <person name="Lucas S."/>
            <person name="Lapidus A."/>
            <person name="Barry K."/>
            <person name="Glavina del Rio T."/>
            <person name="Dalin E."/>
            <person name="Tice H."/>
            <person name="Pitluck S."/>
            <person name="Chain P."/>
            <person name="Malfatti S."/>
            <person name="Shin M."/>
            <person name="Vergez L."/>
            <person name="Schmutz J."/>
            <person name="Larimer F."/>
            <person name="Land M."/>
            <person name="Hauser L."/>
            <person name="Kyrpides N."/>
            <person name="Kim E."/>
            <person name="Taghavi S."/>
            <person name="Newman L."/>
            <person name="Vangronsveld J."/>
            <person name="van der Lelie D."/>
            <person name="Richardson P."/>
        </authorList>
    </citation>
    <scope>NUCLEOTIDE SEQUENCE [LARGE SCALE GENOMIC DNA]</scope>
    <source>
        <strain>568</strain>
    </source>
</reference>
<sequence length="327" mass="36207">MFDLLALTLAGQVPAEQQGENANLHWRWLTEGLLEMTPKPGYRQAVVLSAGIHGNETAPIELLNQLVKDLLNGDRPLAVRLLVVLGNPAAMRAGKRYLHSDMNRMFGGRYRDFDHSGETARAQQLEQVIAEFFADEGAARFHYDLHTAIRDSRLPRFGILPFQTRPYSAEMLALLDAADLDALVIHSAPGGTFSHFTSEHAGAASCTLELGKARPFGVNDLQQFAAINRALQAAVSGEPLPLRSGSELRIFRVERSLIKRSEEFRLHLSDDTANFTELKQGTLLCDQPGEEYRVQHVSEWILFPNPGVALGLRAGMVLVEAPRSTLY</sequence>
<dbReference type="EC" id="3.5.1.96" evidence="1"/>
<dbReference type="EMBL" id="CP000826">
    <property type="protein sequence ID" value="ABV41941.1"/>
    <property type="molecule type" value="Genomic_DNA"/>
</dbReference>
<dbReference type="SMR" id="A8GFQ1"/>
<dbReference type="STRING" id="399741.Spro_2840"/>
<dbReference type="KEGG" id="spe:Spro_2840"/>
<dbReference type="eggNOG" id="COG2988">
    <property type="taxonomic scope" value="Bacteria"/>
</dbReference>
<dbReference type="HOGENOM" id="CLU_071608_0_0_6"/>
<dbReference type="OrthoDB" id="5290473at2"/>
<dbReference type="UniPathway" id="UPA00185">
    <property type="reaction ID" value="UER00283"/>
</dbReference>
<dbReference type="GO" id="GO:0016788">
    <property type="term" value="F:hydrolase activity, acting on ester bonds"/>
    <property type="evidence" value="ECO:0007669"/>
    <property type="project" value="UniProtKB-UniRule"/>
</dbReference>
<dbReference type="GO" id="GO:0009017">
    <property type="term" value="F:succinylglutamate desuccinylase activity"/>
    <property type="evidence" value="ECO:0007669"/>
    <property type="project" value="UniProtKB-EC"/>
</dbReference>
<dbReference type="GO" id="GO:0008270">
    <property type="term" value="F:zinc ion binding"/>
    <property type="evidence" value="ECO:0007669"/>
    <property type="project" value="UniProtKB-UniRule"/>
</dbReference>
<dbReference type="GO" id="GO:0019544">
    <property type="term" value="P:arginine catabolic process to glutamate"/>
    <property type="evidence" value="ECO:0007669"/>
    <property type="project" value="UniProtKB-UniRule"/>
</dbReference>
<dbReference type="GO" id="GO:0019545">
    <property type="term" value="P:arginine catabolic process to succinate"/>
    <property type="evidence" value="ECO:0007669"/>
    <property type="project" value="UniProtKB-UniRule"/>
</dbReference>
<dbReference type="CDD" id="cd03855">
    <property type="entry name" value="M14_ASTE"/>
    <property type="match status" value="1"/>
</dbReference>
<dbReference type="FunFam" id="3.40.630.10:FF:000017">
    <property type="entry name" value="Succinylglutamate desuccinylase"/>
    <property type="match status" value="1"/>
</dbReference>
<dbReference type="Gene3D" id="3.40.630.10">
    <property type="entry name" value="Zn peptidases"/>
    <property type="match status" value="1"/>
</dbReference>
<dbReference type="HAMAP" id="MF_00767">
    <property type="entry name" value="Arg_catab_AstE"/>
    <property type="match status" value="1"/>
</dbReference>
<dbReference type="InterPro" id="IPR050178">
    <property type="entry name" value="AspA/AstE_fam"/>
</dbReference>
<dbReference type="InterPro" id="IPR055438">
    <property type="entry name" value="AstE_AspA_cat"/>
</dbReference>
<dbReference type="InterPro" id="IPR007036">
    <property type="entry name" value="Aste_AspA_hybrid_dom"/>
</dbReference>
<dbReference type="InterPro" id="IPR016681">
    <property type="entry name" value="SuccinylGlu_desuccinylase"/>
</dbReference>
<dbReference type="NCBIfam" id="TIGR03242">
    <property type="entry name" value="arg_catab_astE"/>
    <property type="match status" value="1"/>
</dbReference>
<dbReference type="NCBIfam" id="NF003706">
    <property type="entry name" value="PRK05324.1"/>
    <property type="match status" value="1"/>
</dbReference>
<dbReference type="PANTHER" id="PTHR15162">
    <property type="entry name" value="ASPARTOACYLASE"/>
    <property type="match status" value="1"/>
</dbReference>
<dbReference type="PANTHER" id="PTHR15162:SF7">
    <property type="entry name" value="SUCCINYLGLUTAMATE DESUCCINYLASE"/>
    <property type="match status" value="1"/>
</dbReference>
<dbReference type="Pfam" id="PF24827">
    <property type="entry name" value="AstE_AspA_cat"/>
    <property type="match status" value="1"/>
</dbReference>
<dbReference type="Pfam" id="PF04952">
    <property type="entry name" value="AstE_AspA_hybrid"/>
    <property type="match status" value="1"/>
</dbReference>
<dbReference type="PIRSF" id="PIRSF017020">
    <property type="entry name" value="AstE"/>
    <property type="match status" value="1"/>
</dbReference>
<dbReference type="SUPFAM" id="SSF53187">
    <property type="entry name" value="Zn-dependent exopeptidases"/>
    <property type="match status" value="1"/>
</dbReference>
<feature type="chain" id="PRO_1000062233" description="Succinylglutamate desuccinylase">
    <location>
        <begin position="1"/>
        <end position="327"/>
    </location>
</feature>
<feature type="active site" evidence="1">
    <location>
        <position position="209"/>
    </location>
</feature>
<feature type="binding site" evidence="1">
    <location>
        <position position="53"/>
    </location>
    <ligand>
        <name>Zn(2+)</name>
        <dbReference type="ChEBI" id="CHEBI:29105"/>
    </ligand>
</feature>
<feature type="binding site" evidence="1">
    <location>
        <position position="56"/>
    </location>
    <ligand>
        <name>Zn(2+)</name>
        <dbReference type="ChEBI" id="CHEBI:29105"/>
    </ligand>
</feature>
<feature type="binding site" evidence="1">
    <location>
        <position position="146"/>
    </location>
    <ligand>
        <name>Zn(2+)</name>
        <dbReference type="ChEBI" id="CHEBI:29105"/>
    </ligand>
</feature>
<evidence type="ECO:0000255" key="1">
    <source>
        <dbReference type="HAMAP-Rule" id="MF_00767"/>
    </source>
</evidence>
<organism>
    <name type="scientific">Serratia proteamaculans (strain 568)</name>
    <dbReference type="NCBI Taxonomy" id="399741"/>
    <lineage>
        <taxon>Bacteria</taxon>
        <taxon>Pseudomonadati</taxon>
        <taxon>Pseudomonadota</taxon>
        <taxon>Gammaproteobacteria</taxon>
        <taxon>Enterobacterales</taxon>
        <taxon>Yersiniaceae</taxon>
        <taxon>Serratia</taxon>
    </lineage>
</organism>
<protein>
    <recommendedName>
        <fullName evidence="1">Succinylglutamate desuccinylase</fullName>
        <ecNumber evidence="1">3.5.1.96</ecNumber>
    </recommendedName>
</protein>
<accession>A8GFQ1</accession>
<keyword id="KW-0056">Arginine metabolism</keyword>
<keyword id="KW-0378">Hydrolase</keyword>
<keyword id="KW-0479">Metal-binding</keyword>
<keyword id="KW-0862">Zinc</keyword>
<gene>
    <name evidence="1" type="primary">astE</name>
    <name type="ordered locus">Spro_2840</name>
</gene>
<comment type="function">
    <text evidence="1">Transforms N(2)-succinylglutamate into succinate and glutamate.</text>
</comment>
<comment type="catalytic activity">
    <reaction evidence="1">
        <text>N-succinyl-L-glutamate + H2O = L-glutamate + succinate</text>
        <dbReference type="Rhea" id="RHEA:15169"/>
        <dbReference type="ChEBI" id="CHEBI:15377"/>
        <dbReference type="ChEBI" id="CHEBI:29985"/>
        <dbReference type="ChEBI" id="CHEBI:30031"/>
        <dbReference type="ChEBI" id="CHEBI:58763"/>
        <dbReference type="EC" id="3.5.1.96"/>
    </reaction>
</comment>
<comment type="cofactor">
    <cofactor evidence="1">
        <name>Zn(2+)</name>
        <dbReference type="ChEBI" id="CHEBI:29105"/>
    </cofactor>
    <text evidence="1">Binds 1 zinc ion per subunit.</text>
</comment>
<comment type="pathway">
    <text evidence="1">Amino-acid degradation; L-arginine degradation via AST pathway; L-glutamate and succinate from L-arginine: step 5/5.</text>
</comment>
<comment type="similarity">
    <text evidence="1">Belongs to the AspA/AstE family. Succinylglutamate desuccinylase subfamily.</text>
</comment>